<accession>B8DYK8</accession>
<name>DCDB_DICTD</name>
<organism>
    <name type="scientific">Dictyoglomus turgidum (strain DSM 6724 / Z-1310)</name>
    <dbReference type="NCBI Taxonomy" id="515635"/>
    <lineage>
        <taxon>Bacteria</taxon>
        <taxon>Pseudomonadati</taxon>
        <taxon>Dictyoglomota</taxon>
        <taxon>Dictyoglomia</taxon>
        <taxon>Dictyoglomales</taxon>
        <taxon>Dictyoglomaceae</taxon>
        <taxon>Dictyoglomus</taxon>
    </lineage>
</organism>
<feature type="chain" id="PRO_1000189827" description="dCTP deaminase, dUMP-forming">
    <location>
        <begin position="1"/>
        <end position="194"/>
    </location>
</feature>
<feature type="active site" description="Proton donor/acceptor" evidence="1">
    <location>
        <position position="132"/>
    </location>
</feature>
<feature type="binding site" evidence="1">
    <location>
        <begin position="104"/>
        <end position="109"/>
    </location>
    <ligand>
        <name>dCTP</name>
        <dbReference type="ChEBI" id="CHEBI:61481"/>
    </ligand>
</feature>
<feature type="binding site" evidence="1">
    <location>
        <position position="122"/>
    </location>
    <ligand>
        <name>dCTP</name>
        <dbReference type="ChEBI" id="CHEBI:61481"/>
    </ligand>
</feature>
<feature type="binding site" evidence="1">
    <location>
        <begin position="130"/>
        <end position="132"/>
    </location>
    <ligand>
        <name>dCTP</name>
        <dbReference type="ChEBI" id="CHEBI:61481"/>
    </ligand>
</feature>
<feature type="binding site" evidence="1">
    <location>
        <position position="151"/>
    </location>
    <ligand>
        <name>dCTP</name>
        <dbReference type="ChEBI" id="CHEBI:61481"/>
    </ligand>
</feature>
<feature type="binding site" evidence="1">
    <location>
        <position position="165"/>
    </location>
    <ligand>
        <name>dCTP</name>
        <dbReference type="ChEBI" id="CHEBI:61481"/>
    </ligand>
</feature>
<feature type="binding site" evidence="1">
    <location>
        <position position="172"/>
    </location>
    <ligand>
        <name>dCTP</name>
        <dbReference type="ChEBI" id="CHEBI:61481"/>
    </ligand>
</feature>
<feature type="binding site" evidence="1">
    <location>
        <position position="176"/>
    </location>
    <ligand>
        <name>dCTP</name>
        <dbReference type="ChEBI" id="CHEBI:61481"/>
    </ligand>
</feature>
<feature type="site" description="Important for bifunctional activity" evidence="1">
    <location>
        <begin position="119"/>
        <end position="120"/>
    </location>
</feature>
<keyword id="KW-0378">Hydrolase</keyword>
<keyword id="KW-0546">Nucleotide metabolism</keyword>
<keyword id="KW-0547">Nucleotide-binding</keyword>
<keyword id="KW-1185">Reference proteome</keyword>
<dbReference type="EC" id="3.5.4.30" evidence="1"/>
<dbReference type="EMBL" id="CP001251">
    <property type="protein sequence ID" value="ACK41390.1"/>
    <property type="molecule type" value="Genomic_DNA"/>
</dbReference>
<dbReference type="RefSeq" id="WP_012582476.1">
    <property type="nucleotide sequence ID" value="NC_011661.1"/>
</dbReference>
<dbReference type="RefSeq" id="YP_002352004.1">
    <property type="nucleotide sequence ID" value="NC_011661.1"/>
</dbReference>
<dbReference type="SMR" id="B8DYK8"/>
<dbReference type="STRING" id="515635.Dtur_0052"/>
<dbReference type="EnsemblBacteria" id="ACK41390">
    <property type="protein sequence ID" value="ACK41390"/>
    <property type="gene ID" value="Dtur_0052"/>
</dbReference>
<dbReference type="KEGG" id="dtu:Dtur_0052"/>
<dbReference type="PATRIC" id="fig|515635.4.peg.53"/>
<dbReference type="eggNOG" id="COG0717">
    <property type="taxonomic scope" value="Bacteria"/>
</dbReference>
<dbReference type="HOGENOM" id="CLU_087476_2_1_0"/>
<dbReference type="InParanoid" id="B8DYK8"/>
<dbReference type="OrthoDB" id="9780956at2"/>
<dbReference type="UniPathway" id="UPA00610">
    <property type="reaction ID" value="UER00667"/>
</dbReference>
<dbReference type="Proteomes" id="UP000007719">
    <property type="component" value="Chromosome"/>
</dbReference>
<dbReference type="GO" id="GO:0033973">
    <property type="term" value="F:dCTP deaminase (dUMP-forming) activity"/>
    <property type="evidence" value="ECO:0007669"/>
    <property type="project" value="UniProtKB-UniRule"/>
</dbReference>
<dbReference type="GO" id="GO:0008829">
    <property type="term" value="F:dCTP deaminase activity"/>
    <property type="evidence" value="ECO:0000318"/>
    <property type="project" value="GO_Central"/>
</dbReference>
<dbReference type="GO" id="GO:0000166">
    <property type="term" value="F:nucleotide binding"/>
    <property type="evidence" value="ECO:0007669"/>
    <property type="project" value="UniProtKB-KW"/>
</dbReference>
<dbReference type="GO" id="GO:0006226">
    <property type="term" value="P:dUMP biosynthetic process"/>
    <property type="evidence" value="ECO:0007669"/>
    <property type="project" value="UniProtKB-UniRule"/>
</dbReference>
<dbReference type="GO" id="GO:0006229">
    <property type="term" value="P:dUTP biosynthetic process"/>
    <property type="evidence" value="ECO:0007669"/>
    <property type="project" value="InterPro"/>
</dbReference>
<dbReference type="GO" id="GO:0015949">
    <property type="term" value="P:nucleobase-containing small molecule interconversion"/>
    <property type="evidence" value="ECO:0000318"/>
    <property type="project" value="GO_Central"/>
</dbReference>
<dbReference type="CDD" id="cd07557">
    <property type="entry name" value="trimeric_dUTPase"/>
    <property type="match status" value="1"/>
</dbReference>
<dbReference type="FunFam" id="2.70.40.10:FF:000005">
    <property type="entry name" value="dCTP deaminase, dUMP-forming"/>
    <property type="match status" value="1"/>
</dbReference>
<dbReference type="Gene3D" id="2.70.40.10">
    <property type="match status" value="1"/>
</dbReference>
<dbReference type="HAMAP" id="MF_00146">
    <property type="entry name" value="dCTP_deaminase"/>
    <property type="match status" value="1"/>
</dbReference>
<dbReference type="InterPro" id="IPR011962">
    <property type="entry name" value="dCTP_deaminase"/>
</dbReference>
<dbReference type="InterPro" id="IPR036157">
    <property type="entry name" value="dUTPase-like_sf"/>
</dbReference>
<dbReference type="InterPro" id="IPR033704">
    <property type="entry name" value="dUTPase_trimeric"/>
</dbReference>
<dbReference type="NCBIfam" id="TIGR02274">
    <property type="entry name" value="dCTP_deam"/>
    <property type="match status" value="1"/>
</dbReference>
<dbReference type="PANTHER" id="PTHR42680">
    <property type="entry name" value="DCTP DEAMINASE"/>
    <property type="match status" value="1"/>
</dbReference>
<dbReference type="PANTHER" id="PTHR42680:SF3">
    <property type="entry name" value="DCTP DEAMINASE"/>
    <property type="match status" value="1"/>
</dbReference>
<dbReference type="Pfam" id="PF22769">
    <property type="entry name" value="DCD"/>
    <property type="match status" value="1"/>
</dbReference>
<dbReference type="SUPFAM" id="SSF51283">
    <property type="entry name" value="dUTPase-like"/>
    <property type="match status" value="1"/>
</dbReference>
<reference key="1">
    <citation type="journal article" date="2016" name="Front. Microbiol.">
        <title>The complete genome sequence of hyperthermophile Dictyoglomus turgidum DSM 6724 reveals a specialized carbohydrate fermentor.</title>
        <authorList>
            <person name="Brumm P.J."/>
            <person name="Gowda K."/>
            <person name="Robb F.T."/>
            <person name="Mead D.A."/>
        </authorList>
    </citation>
    <scope>NUCLEOTIDE SEQUENCE [LARGE SCALE GENOMIC DNA]</scope>
    <source>
        <strain>DSM 6724 / Z-1310</strain>
    </source>
</reference>
<proteinExistence type="inferred from homology"/>
<comment type="function">
    <text evidence="1">Bifunctional enzyme that catalyzes both the deamination of dCTP to dUTP and the hydrolysis of dUTP to dUMP without releasing the toxic dUTP intermediate.</text>
</comment>
<comment type="catalytic activity">
    <reaction evidence="1">
        <text>dCTP + 2 H2O = dUMP + NH4(+) + diphosphate</text>
        <dbReference type="Rhea" id="RHEA:19205"/>
        <dbReference type="ChEBI" id="CHEBI:15377"/>
        <dbReference type="ChEBI" id="CHEBI:28938"/>
        <dbReference type="ChEBI" id="CHEBI:33019"/>
        <dbReference type="ChEBI" id="CHEBI:61481"/>
        <dbReference type="ChEBI" id="CHEBI:246422"/>
        <dbReference type="EC" id="3.5.4.30"/>
    </reaction>
</comment>
<comment type="pathway">
    <text evidence="1">Pyrimidine metabolism; dUMP biosynthesis; dUMP from dCTP: step 1/1.</text>
</comment>
<comment type="subunit">
    <text evidence="1">Homotrimer.</text>
</comment>
<comment type="similarity">
    <text evidence="1">Belongs to the dCTP deaminase family.</text>
</comment>
<evidence type="ECO:0000255" key="1">
    <source>
        <dbReference type="HAMAP-Rule" id="MF_00146"/>
    </source>
</evidence>
<sequence>MILSDKDIKKYLEERKLVIHPIDDPQKQIQPSSVDLRLGNSFLHFKVEGRAYIDPTKDNPQDLMEIIEIEEGKPFFLRPGEFVLGTTIETVKLPDDLVARVDGRSSLGRLGIIVHATAGYVDPGFCGQITLELSNINRVPVALYPGMRICQISFYKLTSPAETPYYKKAGSKYHNQKGPTASKLNIDFCVKEDK</sequence>
<gene>
    <name evidence="1" type="primary">dcd</name>
    <name type="ordered locus">Dtur_0052</name>
</gene>
<protein>
    <recommendedName>
        <fullName evidence="1">dCTP deaminase, dUMP-forming</fullName>
        <ecNumber evidence="1">3.5.4.30</ecNumber>
    </recommendedName>
    <alternativeName>
        <fullName evidence="1">Bifunctional dCTP deaminase:dUTPase</fullName>
    </alternativeName>
    <alternativeName>
        <fullName evidence="1">DCD-DUT</fullName>
    </alternativeName>
</protein>